<name>MDTK_ECODH</name>
<dbReference type="EMBL" id="CP000948">
    <property type="protein sequence ID" value="ACB02867.1"/>
    <property type="molecule type" value="Genomic_DNA"/>
</dbReference>
<dbReference type="RefSeq" id="WP_001174940.1">
    <property type="nucleotide sequence ID" value="NC_010473.1"/>
</dbReference>
<dbReference type="SMR" id="B1XFX3"/>
<dbReference type="KEGG" id="ecd:ECDH10B_1797"/>
<dbReference type="HOGENOM" id="CLU_012893_6_0_6"/>
<dbReference type="GO" id="GO:0005886">
    <property type="term" value="C:plasma membrane"/>
    <property type="evidence" value="ECO:0007669"/>
    <property type="project" value="UniProtKB-SubCell"/>
</dbReference>
<dbReference type="GO" id="GO:0015297">
    <property type="term" value="F:antiporter activity"/>
    <property type="evidence" value="ECO:0007669"/>
    <property type="project" value="UniProtKB-UniRule"/>
</dbReference>
<dbReference type="GO" id="GO:0042910">
    <property type="term" value="F:xenobiotic transmembrane transporter activity"/>
    <property type="evidence" value="ECO:0007669"/>
    <property type="project" value="UniProtKB-UniRule"/>
</dbReference>
<dbReference type="GO" id="GO:0006814">
    <property type="term" value="P:sodium ion transport"/>
    <property type="evidence" value="ECO:0007669"/>
    <property type="project" value="UniProtKB-UniRule"/>
</dbReference>
<dbReference type="GO" id="GO:0006855">
    <property type="term" value="P:xenobiotic transmembrane transport"/>
    <property type="evidence" value="ECO:0007669"/>
    <property type="project" value="UniProtKB-UniRule"/>
</dbReference>
<dbReference type="CDD" id="cd13131">
    <property type="entry name" value="MATE_NorM_like"/>
    <property type="match status" value="1"/>
</dbReference>
<dbReference type="HAMAP" id="MF_00400">
    <property type="entry name" value="MdtK"/>
    <property type="match status" value="1"/>
</dbReference>
<dbReference type="InterPro" id="IPR002528">
    <property type="entry name" value="MATE_fam"/>
</dbReference>
<dbReference type="InterPro" id="IPR050222">
    <property type="entry name" value="MATE_MdtK"/>
</dbReference>
<dbReference type="InterPro" id="IPR048279">
    <property type="entry name" value="MdtK-like"/>
</dbReference>
<dbReference type="InterPro" id="IPR022913">
    <property type="entry name" value="Multidrug-R_MdtK"/>
</dbReference>
<dbReference type="NCBIfam" id="TIGR00797">
    <property type="entry name" value="matE"/>
    <property type="match status" value="1"/>
</dbReference>
<dbReference type="PANTHER" id="PTHR43298:SF2">
    <property type="entry name" value="FMN_FAD EXPORTER YEEO-RELATED"/>
    <property type="match status" value="1"/>
</dbReference>
<dbReference type="PANTHER" id="PTHR43298">
    <property type="entry name" value="MULTIDRUG RESISTANCE PROTEIN NORM-RELATED"/>
    <property type="match status" value="1"/>
</dbReference>
<dbReference type="Pfam" id="PF01554">
    <property type="entry name" value="MatE"/>
    <property type="match status" value="2"/>
</dbReference>
<dbReference type="PIRSF" id="PIRSF006603">
    <property type="entry name" value="DinF"/>
    <property type="match status" value="1"/>
</dbReference>
<keyword id="KW-0050">Antiport</keyword>
<keyword id="KW-0997">Cell inner membrane</keyword>
<keyword id="KW-1003">Cell membrane</keyword>
<keyword id="KW-0406">Ion transport</keyword>
<keyword id="KW-0472">Membrane</keyword>
<keyword id="KW-0915">Sodium</keyword>
<keyword id="KW-0739">Sodium transport</keyword>
<keyword id="KW-0812">Transmembrane</keyword>
<keyword id="KW-1133">Transmembrane helix</keyword>
<keyword id="KW-0813">Transport</keyword>
<comment type="function">
    <text evidence="1">Multidrug efflux pump that functions probably as a Na(+)/drug antiporter.</text>
</comment>
<comment type="subcellular location">
    <subcellularLocation>
        <location evidence="1">Cell inner membrane</location>
        <topology evidence="1">Multi-pass membrane protein</topology>
    </subcellularLocation>
</comment>
<comment type="similarity">
    <text evidence="1">Belongs to the multi antimicrobial extrusion (MATE) (TC 2.A.66.1) family. MdtK subfamily.</text>
</comment>
<reference key="1">
    <citation type="journal article" date="2008" name="J. Bacteriol.">
        <title>The complete genome sequence of Escherichia coli DH10B: insights into the biology of a laboratory workhorse.</title>
        <authorList>
            <person name="Durfee T."/>
            <person name="Nelson R."/>
            <person name="Baldwin S."/>
            <person name="Plunkett G. III"/>
            <person name="Burland V."/>
            <person name="Mau B."/>
            <person name="Petrosino J.F."/>
            <person name="Qin X."/>
            <person name="Muzny D.M."/>
            <person name="Ayele M."/>
            <person name="Gibbs R.A."/>
            <person name="Csorgo B."/>
            <person name="Posfai G."/>
            <person name="Weinstock G.M."/>
            <person name="Blattner F.R."/>
        </authorList>
    </citation>
    <scope>NUCLEOTIDE SEQUENCE [LARGE SCALE GENOMIC DNA]</scope>
    <source>
        <strain>K12 / DH10B</strain>
    </source>
</reference>
<accession>B1XFX3</accession>
<organism>
    <name type="scientific">Escherichia coli (strain K12 / DH10B)</name>
    <dbReference type="NCBI Taxonomy" id="316385"/>
    <lineage>
        <taxon>Bacteria</taxon>
        <taxon>Pseudomonadati</taxon>
        <taxon>Pseudomonadota</taxon>
        <taxon>Gammaproteobacteria</taxon>
        <taxon>Enterobacterales</taxon>
        <taxon>Enterobacteriaceae</taxon>
        <taxon>Escherichia</taxon>
    </lineage>
</organism>
<sequence>MQKYISEARLLLALAIPVILAQIAQTAMGFVDTVMAGGYSATDMAAVAIGTSIWLPAILFGHGLLLALTPVIAQLNGSGRRERIAHQVRQGFWLAGFVSVLIMLVLWNAGYIIRSMENIDPALADKAVGYLRALLWGAPGYLFFQVARNQCEGLAKTKPGMVMGFIGLLVNIPVNYIFIYGHFGMPELGGVGCGVATAAVYWVMFLAMVSYIKRARSMRDIRNEKGTAKPDPAVMKRLIQLGLPIALALFFEVTLFAVVALLVSPLGIVDVAGHQIALNFSSLMFVLPMSLAAAVTIRVGYRLGQGSTLDAQTAARTGLMVGVCMATLTAIFTVSLREQIALLYNDNPEVVTLAAHLMLLAAVYQISDSIQVIGSGILRGYKDTRSIFYITFTAYWVLGLPSGYILALTDLVVEPMGPAGFWIGFIIGLTSAAIMMMLRMRFLQRLPSAIILQRASR</sequence>
<gene>
    <name evidence="1" type="primary">mdtK</name>
    <name type="ordered locus">ECDH10B_1797</name>
</gene>
<proteinExistence type="inferred from homology"/>
<evidence type="ECO:0000255" key="1">
    <source>
        <dbReference type="HAMAP-Rule" id="MF_00400"/>
    </source>
</evidence>
<protein>
    <recommendedName>
        <fullName evidence="1">Multidrug resistance protein MdtK</fullName>
    </recommendedName>
    <alternativeName>
        <fullName evidence="1">Multidrug-efflux transporter</fullName>
    </alternativeName>
</protein>
<feature type="chain" id="PRO_1000191089" description="Multidrug resistance protein MdtK">
    <location>
        <begin position="1"/>
        <end position="457"/>
    </location>
</feature>
<feature type="transmembrane region" description="Helical" evidence="1">
    <location>
        <begin position="11"/>
        <end position="31"/>
    </location>
</feature>
<feature type="transmembrane region" description="Helical" evidence="1">
    <location>
        <begin position="53"/>
        <end position="73"/>
    </location>
</feature>
<feature type="transmembrane region" description="Helical" evidence="1">
    <location>
        <begin position="93"/>
        <end position="113"/>
    </location>
</feature>
<feature type="transmembrane region" description="Helical" evidence="1">
    <location>
        <begin position="127"/>
        <end position="147"/>
    </location>
</feature>
<feature type="transmembrane region" description="Helical" evidence="1">
    <location>
        <begin position="160"/>
        <end position="180"/>
    </location>
</feature>
<feature type="transmembrane region" description="Helical" evidence="1">
    <location>
        <begin position="189"/>
        <end position="209"/>
    </location>
</feature>
<feature type="transmembrane region" description="Helical" evidence="1">
    <location>
        <begin position="243"/>
        <end position="263"/>
    </location>
</feature>
<feature type="transmembrane region" description="Helical" evidence="1">
    <location>
        <begin position="276"/>
        <end position="296"/>
    </location>
</feature>
<feature type="transmembrane region" description="Helical" evidence="1">
    <location>
        <begin position="314"/>
        <end position="334"/>
    </location>
</feature>
<feature type="transmembrane region" description="Helical" evidence="1">
    <location>
        <begin position="350"/>
        <end position="370"/>
    </location>
</feature>
<feature type="transmembrane region" description="Helical" evidence="1">
    <location>
        <begin position="387"/>
        <end position="407"/>
    </location>
</feature>
<feature type="transmembrane region" description="Helical" evidence="1">
    <location>
        <begin position="418"/>
        <end position="438"/>
    </location>
</feature>